<feature type="chain" id="PRO_0000222023" description="RNA-directed RNA polymerase L">
    <location>
        <begin position="1"/>
        <end position="2149"/>
    </location>
</feature>
<feature type="domain" description="RdRp catalytic" evidence="5">
    <location>
        <begin position="975"/>
        <end position="1166"/>
    </location>
</feature>
<feature type="region of interest" description="Endonuclease" evidence="2">
    <location>
        <begin position="18"/>
        <end position="216"/>
    </location>
</feature>
<feature type="region of interest" description="Cap-binding" evidence="2">
    <location>
        <begin position="1706"/>
        <end position="1822"/>
    </location>
</feature>
<feature type="active site" description="For endonuclease activity" evidence="3">
    <location>
        <position position="143"/>
    </location>
</feature>
<feature type="binding site" evidence="2">
    <location>
        <position position="79"/>
    </location>
    <ligand>
        <name>Mn(2+)</name>
        <dbReference type="ChEBI" id="CHEBI:29035"/>
        <label>1</label>
    </ligand>
</feature>
<feature type="binding site" evidence="15">
    <location>
        <position position="111"/>
    </location>
    <ligand>
        <name>Mn(2+)</name>
        <dbReference type="ChEBI" id="CHEBI:29035"/>
        <label>1</label>
    </ligand>
</feature>
<feature type="binding site" evidence="15">
    <location>
        <position position="111"/>
    </location>
    <ligand>
        <name>Mn(2+)</name>
        <dbReference type="ChEBI" id="CHEBI:29035"/>
        <label>2</label>
    </ligand>
</feature>
<feature type="binding site" evidence="2">
    <location>
        <position position="125"/>
    </location>
    <ligand>
        <name>Mn(2+)</name>
        <dbReference type="ChEBI" id="CHEBI:29035"/>
        <label>1</label>
    </ligand>
</feature>
<feature type="binding site" evidence="3">
    <location>
        <position position="1134"/>
    </location>
    <ligand>
        <name>Mg(2+)</name>
        <dbReference type="ChEBI" id="CHEBI:18420"/>
        <note>catalytic; for RdRp activity</note>
    </ligand>
</feature>
<feature type="mutagenesis site" description="Loss of transcriptional activity but fully active in replication." evidence="8">
    <original>D</original>
    <variation>A</variation>
    <location>
        <position position="111"/>
    </location>
</feature>
<feature type="mutagenesis site" description="RNA synthesis products are still produced." evidence="12">
    <original>D</original>
    <variation>A</variation>
    <location>
        <position position="111"/>
    </location>
</feature>
<dbReference type="EC" id="2.7.7.48" evidence="12"/>
<dbReference type="EC" id="3.1.-.-" evidence="3"/>
<dbReference type="EMBL" id="X56464">
    <property type="protein sequence ID" value="CAA39836.1"/>
    <property type="molecule type" value="Genomic_RNA"/>
</dbReference>
<dbReference type="PIR" id="S18676">
    <property type="entry name" value="S18676"/>
</dbReference>
<dbReference type="PDB" id="7EEI">
    <property type="method" value="X-ray"/>
    <property type="resolution" value="3.60 A"/>
    <property type="chains" value="A=216-1990"/>
</dbReference>
<dbReference type="PDBsum" id="7EEI"/>
<dbReference type="SMR" id="P27316"/>
<dbReference type="Proteomes" id="UP000002477">
    <property type="component" value="Genome"/>
</dbReference>
<dbReference type="GO" id="GO:0044165">
    <property type="term" value="C:host cell endoplasmic reticulum"/>
    <property type="evidence" value="ECO:0007669"/>
    <property type="project" value="UniProtKB-SubCell"/>
</dbReference>
<dbReference type="GO" id="GO:0044172">
    <property type="term" value="C:host cell endoplasmic reticulum-Golgi intermediate compartment"/>
    <property type="evidence" value="ECO:0007669"/>
    <property type="project" value="UniProtKB-SubCell"/>
</dbReference>
<dbReference type="GO" id="GO:0044177">
    <property type="term" value="C:host cell Golgi apparatus"/>
    <property type="evidence" value="ECO:0007669"/>
    <property type="project" value="UniProtKB-SubCell"/>
</dbReference>
<dbReference type="GO" id="GO:0044423">
    <property type="term" value="C:virion component"/>
    <property type="evidence" value="ECO:0007669"/>
    <property type="project" value="UniProtKB-KW"/>
</dbReference>
<dbReference type="GO" id="GO:0016787">
    <property type="term" value="F:hydrolase activity"/>
    <property type="evidence" value="ECO:0007669"/>
    <property type="project" value="UniProtKB-KW"/>
</dbReference>
<dbReference type="GO" id="GO:0046872">
    <property type="term" value="F:metal ion binding"/>
    <property type="evidence" value="ECO:0007669"/>
    <property type="project" value="UniProtKB-KW"/>
</dbReference>
<dbReference type="GO" id="GO:0001882">
    <property type="term" value="F:nucleoside binding"/>
    <property type="evidence" value="ECO:0007669"/>
    <property type="project" value="InterPro"/>
</dbReference>
<dbReference type="GO" id="GO:0000166">
    <property type="term" value="F:nucleotide binding"/>
    <property type="evidence" value="ECO:0007669"/>
    <property type="project" value="UniProtKB-KW"/>
</dbReference>
<dbReference type="GO" id="GO:0003968">
    <property type="term" value="F:RNA-directed RNA polymerase activity"/>
    <property type="evidence" value="ECO:0007669"/>
    <property type="project" value="UniProtKB-KW"/>
</dbReference>
<dbReference type="GO" id="GO:0006351">
    <property type="term" value="P:DNA-templated transcription"/>
    <property type="evidence" value="ECO:0007669"/>
    <property type="project" value="InterPro"/>
</dbReference>
<dbReference type="GO" id="GO:0039689">
    <property type="term" value="P:negative stranded viral RNA replication"/>
    <property type="evidence" value="ECO:0000250"/>
    <property type="project" value="UniProtKB"/>
</dbReference>
<dbReference type="GO" id="GO:0039696">
    <property type="term" value="P:RNA-templated viral transcription"/>
    <property type="evidence" value="ECO:0000250"/>
    <property type="project" value="UniProtKB"/>
</dbReference>
<dbReference type="InterPro" id="IPR022531">
    <property type="entry name" value="L_PA-C-like"/>
</dbReference>
<dbReference type="InterPro" id="IPR029124">
    <property type="entry name" value="L_protein_N"/>
</dbReference>
<dbReference type="InterPro" id="IPR007099">
    <property type="entry name" value="RNA-dir_pol_NSvirus"/>
</dbReference>
<dbReference type="InterPro" id="IPR014385">
    <property type="entry name" value="RNA-dir_pol_phlebovirus"/>
</dbReference>
<dbReference type="InterPro" id="IPR007322">
    <property type="entry name" value="RNA_pol_bunyavir"/>
</dbReference>
<dbReference type="Pfam" id="PF04196">
    <property type="entry name" value="Bunya_RdRp"/>
    <property type="match status" value="1"/>
</dbReference>
<dbReference type="Pfam" id="PF12603">
    <property type="entry name" value="L_PA-C-like"/>
    <property type="match status" value="1"/>
</dbReference>
<dbReference type="Pfam" id="PF15518">
    <property type="entry name" value="L_protein_N"/>
    <property type="match status" value="1"/>
</dbReference>
<dbReference type="PIRSF" id="PIRSF000826">
    <property type="entry name" value="L_PhleboV"/>
    <property type="match status" value="1"/>
</dbReference>
<dbReference type="PROSITE" id="PS50525">
    <property type="entry name" value="RDRP_SSRNA_NEG_SEG"/>
    <property type="match status" value="1"/>
</dbReference>
<proteinExistence type="evidence at protein level"/>
<keyword id="KW-0002">3D-structure</keyword>
<keyword id="KW-1038">Host endoplasmic reticulum</keyword>
<keyword id="KW-1040">Host Golgi apparatus</keyword>
<keyword id="KW-0378">Hydrolase</keyword>
<keyword id="KW-0460">Magnesium</keyword>
<keyword id="KW-0464">Manganese</keyword>
<keyword id="KW-0479">Metal-binding</keyword>
<keyword id="KW-0547">Nucleotide-binding</keyword>
<keyword id="KW-0548">Nucleotidyltransferase</keyword>
<keyword id="KW-1185">Reference proteome</keyword>
<keyword id="KW-0696">RNA-directed RNA polymerase</keyword>
<keyword id="KW-0808">Transferase</keyword>
<keyword id="KW-0693">Viral RNA replication</keyword>
<keyword id="KW-0946">Virion</keyword>
<protein>
    <recommendedName>
        <fullName>RNA-directed RNA polymerase L</fullName>
        <shortName>Protein L</shortName>
        <ecNumber evidence="12">2.7.7.48</ecNumber>
    </recommendedName>
    <alternativeName>
        <fullName>Large structural protein</fullName>
    </alternativeName>
    <alternativeName>
        <fullName>Replicase</fullName>
    </alternativeName>
    <alternativeName>
        <fullName>Transcriptase</fullName>
    </alternativeName>
    <domain>
        <recommendedName>
            <fullName>cap-snatching endonuclease</fullName>
            <ecNumber evidence="3">3.1.-.-</ecNumber>
        </recommendedName>
    </domain>
</protein>
<gene>
    <name type="primary">L</name>
</gene>
<organismHost>
    <name type="scientific">Aedes</name>
    <dbReference type="NCBI Taxonomy" id="7158"/>
</organismHost>
<organismHost>
    <name type="scientific">Bos taurus</name>
    <name type="common">Bovine</name>
    <dbReference type="NCBI Taxonomy" id="9913"/>
</organismHost>
<organismHost>
    <name type="scientific">Bos taurus x Bison bison</name>
    <name type="common">beefalo</name>
    <dbReference type="NCBI Taxonomy" id="297284"/>
</organismHost>
<organismHost>
    <name type="scientific">Camelus bactrianus</name>
    <name type="common">Bactrian camel</name>
    <dbReference type="NCBI Taxonomy" id="9837"/>
</organismHost>
<organismHost>
    <name type="scientific">Capra hircus</name>
    <name type="common">Goat</name>
    <dbReference type="NCBI Taxonomy" id="9925"/>
</organismHost>
<organismHost>
    <name type="scientific">Homo sapiens</name>
    <name type="common">Human</name>
    <dbReference type="NCBI Taxonomy" id="9606"/>
</organismHost>
<organismHost>
    <name type="scientific">Ovis aries</name>
    <name type="common">Sheep</name>
    <dbReference type="NCBI Taxonomy" id="9940"/>
</organismHost>
<organismHost>
    <name type="scientific">Phlebotomus papatasi</name>
    <name type="common">Sandfly</name>
    <dbReference type="NCBI Taxonomy" id="29031"/>
</organismHost>
<sequence length="2149" mass="243591">MDSILSKQLVDKTGFVRVPIKHFDCTMLTLALPTFDVSKMVDRITIDFNLDDIQGASEIGSTLLPSMSIDVEDMANFVHDFTFGHLADKTDRLLMREFPMMNDGFDHLSPDMIIKTTSGVYNIVEFTNFRGDERGAFQAAMIKLAKYEVPCENRSQGRTVVLYVVSAYRAWCMVYLELERTLKQREMVYRYRLALSVMDELRTLFPELSSTDEELGKTERELPAMVSSIQINWSVTESVFPPFSREMFDRFRSSPPDSEYITRIVSRCLINSQEKLINSSFFAEGNDKALRFSKNAEECSLAVERALNQYRAEDNLRDLNDHKSTIQLPPWLSYHDVDGKDLCPLQGLDVRGDHPMCNLWREVVTSANLEEIERMHDDAAAELEFAFGSKGQARERNRYHRVHLNMGSDVLVYIAALGVNGKKHKADTLVQQMRDRSKQPFSPDHDVITYLNFSLHALVTCGQQMRTCTALSLVIRDSVGSPEDSSAILVRKGFHEIITEHYKFMGSRIGHGCQMVSLIGAELSASVKQHVKPNYFVIKRLLGSGIFLLIKPTSSKSHIFVSFALSALAGPLISPLPGFSSPTKMLGILLVTDFVSYKLSKLTNLCKCVSLMESSFSFWAEAFGIQAGTLVGDFVPRSSDSAAMDASYMGKLSLLTLLEDKAATEELQTIARYIIMEGFVSPPEIPKPHKMTSKFPKVLRSELQVYLLNCLCRTIQRIAGEPFILKKKDGSISWGGMFNPFSGRPLLDMQPLISCCYNGYFKNKEEETEPSSLSGMYKKIIELEHLRPQSDAFLGYKDPELPRMHEFSVSYLKEACNHAKLVLRSLYGQNFMEQIDNQIIRELSGLTLERLATLKATSNFNENWYVYKDVADKNYTRDKLLVKMSKYASEGKSLAIQKFEDCMRQIESQGCMHICLFKKQQHGGLREIYVMGAEERIVQSVVETIARSIGKFFASDTLCNPPNKVKIPETHGIRARKQCKGPVWTCATSDDARKWNQGHFVTKFALMLCEFTSPKWWPLIIRGCSMFTKKRMMMNLNYLKILDGHRELDIRDDFVMDLFKAYHGEAEVPWAFKGKTYLETTTGMMQGILHYTSSLLHTIHQEYIRSLSFKIFNLKVAPEMSKSLVCDMMQGSDDSSMLISFPADDEKVLTRCKVAAAICFRMKKELGVYLAIYPSEKSTANTDFVMEYNSEFYFHTQHVRPTIRWIAACCSLPEVETLVARQEEASNLMTSVTEGGGSFSLAAIIQQAQCTLHYMLMGMGVSELFLEYKKAVLKWNDPGLGFFLLDNPYACGLGGFRFNLFKAITRTDLQKLYAFFMKKVKGSAARDWADEDVTIPETCSVSPGGALILSSSLKWGSRKKFQKLRDRLNIPENWIELINENPEVLYRAPRTGPEILLRIAEKVHSPGVVSSLSSGNAVCKVMASAVYFLSATIFEDTGRPEFNFLEDSKYSLLQKMAAYSGFHGFNDMEPEDILFLFPNIEELESLDSIVYNKGEIDIIPRVNIRDATQTRVTIFNEQKNLRTSPEKLVSDKWFGTQKSRIGKTTFLAEWEKLKKIVKWLEDAPEATLAHTPLNNHIQVRNFFARMESKPRTVRITGAPVKKRSGVSKIAMVIRDHFSRMGHLRGVEDLAGFTRSVSAEILKHFLFCILQGPYSESYKLQLIYRVLSSVSNVEIKESDGKTKTNLIGILQRFLDGDHVVPIIEEMGAGTVGGFIKRQQSKVVQNKVVYYGVGIWRGFMDGYQVHLEIENDIGQPPRLRNVTTNCQSSPWDLSIPIRQWAEDMGVTNNQDYSSKSSRGARYWMHSFRMQGPSKPFGCPVYIIKGDMSDVIRLRKEEVEMKVRGSTLNLYTKHHSHQDLHILSYTASDNDLSPGIFKSISDEGVAQALQLFEREPSNCWVRCESVAPKFISAILEICEGKRQIKGINRTRLSEIVRICSESSLRSKVGSMFSFVANVEEAHDVDYDALMDLMIEDAKNNAFSHVVDCIELDVSGPYEMESFHGRSTLTCTPSTILIRTYTFYLTLHQTMISVQAFQVILDEGVLLIALVNNYLRGSKANCWVRCESVAPKFISAILEICEGKRQIKGINRTRLSEIVEFVLNLPKIKSRIYVLICRQCHGANFPPISVRRLMLEDIASVARRLIIVASFGS</sequence>
<name>L_RVFVZ</name>
<comment type="function">
    <text evidence="2 3 8 9">RNA-dependent RNA polymerase, which is responsible for the replication and transcription of the viral RNA genome using antigenomic RNA as an intermediate (PubMed:23698297). During transcription, synthesizes subgenomic RNAs and assures their capping by a cap-snatching mechanism, which involves the endonuclease activity cleaving the host capped pre-mRNAs (PubMed:23824541). These short capped RNAs are then used as primers for viral transcription. The 3'-end of subgenomic mRNAs molecules are not polyadenylated. During replication, the polymerase binds the 5' and 3' vRNA extremities at distinct sites (By similarity). In turn, significant conformational changes occur in the polymerase and in vRNA to initiate active RNA synthesis (By similarity). As a consequence of the use of the same enzyme for both transcription and replication, these mechanisms need to be well coordinated (By similarity).</text>
</comment>
<comment type="catalytic activity">
    <reaction evidence="5 12">
        <text>RNA(n) + a ribonucleoside 5'-triphosphate = RNA(n+1) + diphosphate</text>
        <dbReference type="Rhea" id="RHEA:21248"/>
        <dbReference type="Rhea" id="RHEA-COMP:14527"/>
        <dbReference type="Rhea" id="RHEA-COMP:17342"/>
        <dbReference type="ChEBI" id="CHEBI:33019"/>
        <dbReference type="ChEBI" id="CHEBI:61557"/>
        <dbReference type="ChEBI" id="CHEBI:140395"/>
        <dbReference type="EC" id="2.7.7.48"/>
    </reaction>
</comment>
<comment type="cofactor">
    <cofactor evidence="12">
        <name>Mn(2+)</name>
        <dbReference type="ChEBI" id="CHEBI:29035"/>
    </cofactor>
    <text evidence="10 12">For endonuclease activity. Binds 2 Mn(2+) ions in the active site (PubMed:34787453). The divalent metal ions are crucial for catalytic activity (PubMed:31948728).</text>
</comment>
<comment type="cofactor">
    <cofactor evidence="12">
        <name>Mg(2+)</name>
        <dbReference type="ChEBI" id="CHEBI:18420"/>
    </cofactor>
    <cofactor evidence="12">
        <name>Mn(2+)</name>
        <dbReference type="ChEBI" id="CHEBI:29035"/>
    </cofactor>
    <text evidence="12">For polymerase activity. Initiation activity is stronger in the presence of Mn(2+) than in the presence of Mg(2+).</text>
</comment>
<comment type="subunit">
    <text evidence="6 7 11">Homomultimer (PubMed:19812169). Interacts with glycoprotein N; this interaction allows efficient polymerase packaging into virus particles (PubMed:21445316). Interacts with nucleoprotein N (PubMed:33952635).</text>
</comment>
<comment type="subcellular location">
    <subcellularLocation>
        <location evidence="3">Host Golgi apparatus</location>
    </subcellularLocation>
    <subcellularLocation>
        <location evidence="3">Host endoplasmic reticulum</location>
    </subcellularLocation>
    <subcellularLocation>
        <location evidence="3">Host endoplasmic reticulum-Golgi intermediate compartment</location>
    </subcellularLocation>
    <subcellularLocation>
        <location evidence="4">Virion</location>
    </subcellularLocation>
</comment>
<comment type="domain">
    <text evidence="1 2 3">The N-terminus contains the endonuclease activity (endoN) (By similarity). The central region contains the RdRp activity (By similarity). The C-terminus contains the cap-binding region (By similarity).</text>
</comment>
<comment type="miscellaneous">
    <text evidence="13">Classified as His(+) endonuclease since it has a histidine upstream of the active site that coordinates the first cation.</text>
</comment>
<comment type="similarity">
    <text evidence="14">Belongs to the Bunyavirales RNA polymerase family.</text>
</comment>
<organism>
    <name type="scientific">Rift valley fever virus (strain ZH-548 M12)</name>
    <name type="common">RVFV</name>
    <dbReference type="NCBI Taxonomy" id="11589"/>
    <lineage>
        <taxon>Viruses</taxon>
        <taxon>Riboviria</taxon>
        <taxon>Orthornavirae</taxon>
        <taxon>Negarnaviricota</taxon>
        <taxon>Polyploviricotina</taxon>
        <taxon>Ellioviricetes</taxon>
        <taxon>Bunyavirales</taxon>
        <taxon>Phenuiviridae</taxon>
        <taxon>Phlebovirus</taxon>
        <taxon>Phlebovirus riftense</taxon>
    </lineage>
</organism>
<reference key="1">
    <citation type="journal article" date="1991" name="Nucleic Acids Res.">
        <title>Completion of the genome sequence of Rift Valley fever phlebovirus indicates that the L RNA is negative sense and codes for a putative transcriptase-replicase.</title>
        <authorList>
            <person name="Mueller R."/>
            <person name="Argentini C."/>
            <person name="Bouloy M."/>
            <person name="Prehaud C."/>
            <person name="Bishop D.H.L."/>
        </authorList>
    </citation>
    <scope>NUCLEOTIDE SEQUENCE [GENOMIC RNA]</scope>
</reference>
<reference key="2">
    <citation type="journal article" date="2009" name="J. Virol.">
        <title>Rift valley fever virus L protein forms a biologically active oligomer.</title>
        <authorList>
            <person name="Zamoto-Niikura A."/>
            <person name="Terasaki K."/>
            <person name="Ikegami T."/>
            <person name="Peters C.J."/>
            <person name="Makino S."/>
        </authorList>
    </citation>
    <scope>SUBUNIT</scope>
    <source>
        <strain>MP12</strain>
    </source>
</reference>
<reference key="3">
    <citation type="journal article" date="2011" name="PLoS ONE">
        <title>Efficient cellular release of Rift Valley fever virus requires genomic RNA.</title>
        <authorList>
            <person name="Piper M.E."/>
            <person name="Sorenson D.R."/>
            <person name="Gerrard S.R."/>
        </authorList>
    </citation>
    <scope>INTERACTION WITH GLYCOPROTEIN N</scope>
</reference>
<reference key="4">
    <citation type="journal article" date="2013" name="Genes Dev.">
        <title>A genome-wide RNAi screen reveals that mRNA decapping restricts bunyaviral replication by limiting the pools of Dcp2-accessible targets for cap-snatching.</title>
        <authorList>
            <person name="Hopkins K.C."/>
            <person name="McLane L.M."/>
            <person name="Maqbool T."/>
            <person name="Panda D."/>
            <person name="Gordesky-Gold B."/>
            <person name="Cherry S."/>
        </authorList>
    </citation>
    <scope>FUNCTION</scope>
</reference>
<reference key="5">
    <citation type="journal article" date="2013" name="J. Virol.">
        <title>Systems to establish bunyavirus genome replication in the absence of transcription.</title>
        <authorList>
            <person name="Klemm C."/>
            <person name="Reguera J."/>
            <person name="Cusack S."/>
            <person name="Zielecki F."/>
            <person name="Kochs G."/>
            <person name="Weber F."/>
        </authorList>
    </citation>
    <scope>FUNCTION</scope>
    <scope>MUTAGENESIS OF ASP-111</scope>
</reference>
<reference key="6">
    <citation type="journal article" date="2017" name="Crit. Rev. Microbiol.">
        <title>Bunyaviridae RdRps: structure, motifs, and RNA synthesis machinery.</title>
        <authorList>
            <person name="Amroun A."/>
            <person name="Priet S."/>
            <person name="de Lamballerie X."/>
            <person name="Querat G."/>
        </authorList>
    </citation>
    <scope>REVIEW</scope>
</reference>
<reference key="7">
    <citation type="journal article" date="2020" name="Trends Microbiol.">
        <title>The Cap-Snatching Mechanism of Bunyaviruses.</title>
        <authorList>
            <person name="Olschewski S."/>
            <person name="Cusack S."/>
            <person name="Rosenthal M."/>
        </authorList>
    </citation>
    <scope>REVIEW</scope>
</reference>
<reference key="8">
    <citation type="journal article" date="2021" name="J. Virol.">
        <title>Characterization of the Molecular Interactions That Govern the Packaging of Viral RNA Segments into Rift Valley Fever Phlebovirus Particles.</title>
        <authorList>
            <person name="Tercero B."/>
            <person name="Narayanan K."/>
            <person name="Terasaki K."/>
            <person name="Makino S."/>
        </authorList>
    </citation>
    <scope>INTERACTION WITH NUCLEOPROTEIN N</scope>
</reference>
<reference key="9">
    <citation type="journal article" date="2022" name="J. Virol.">
        <title>Structure of Rift Valley Fever Virus RNA-Dependent RNA Polymerase.</title>
        <authorList>
            <person name="Wang X."/>
            <person name="Hu C."/>
            <person name="Ye W."/>
            <person name="Wang J."/>
            <person name="Dong X."/>
            <person name="Xu J."/>
            <person name="Li X."/>
            <person name="Zhang M."/>
            <person name="Lu H."/>
            <person name="Zhang F."/>
            <person name="Wu W."/>
            <person name="Dai S."/>
            <person name="Wang H.W."/>
            <person name="Chen Z."/>
        </authorList>
    </citation>
    <scope>STRUCTURE BY ELECTRON MICROSCOPY (3.60 ANGSTROMS) OF 216-</scope>
    <scope>COFACTOR</scope>
    <scope>CATALYTIC ACTIVITY</scope>
    <scope>MUTAGENESIS OF ASP-111</scope>
</reference>
<accession>P27316</accession>
<evidence type="ECO:0000250" key="1">
    <source>
        <dbReference type="UniProtKB" id="A2SZS3"/>
    </source>
</evidence>
<evidence type="ECO:0000250" key="2">
    <source>
        <dbReference type="UniProtKB" id="A5HC98"/>
    </source>
</evidence>
<evidence type="ECO:0000250" key="3">
    <source>
        <dbReference type="UniProtKB" id="I0DF35"/>
    </source>
</evidence>
<evidence type="ECO:0000250" key="4">
    <source>
        <dbReference type="UniProtKB" id="P20470"/>
    </source>
</evidence>
<evidence type="ECO:0000255" key="5">
    <source>
        <dbReference type="PROSITE-ProRule" id="PRU00539"/>
    </source>
</evidence>
<evidence type="ECO:0000269" key="6">
    <source>
    </source>
</evidence>
<evidence type="ECO:0000269" key="7">
    <source>
    </source>
</evidence>
<evidence type="ECO:0000269" key="8">
    <source>
    </source>
</evidence>
<evidence type="ECO:0000269" key="9">
    <source>
    </source>
</evidence>
<evidence type="ECO:0000269" key="10">
    <source>
    </source>
</evidence>
<evidence type="ECO:0000269" key="11">
    <source>
    </source>
</evidence>
<evidence type="ECO:0000269" key="12">
    <source>
    </source>
</evidence>
<evidence type="ECO:0000303" key="13">
    <source>
    </source>
</evidence>
<evidence type="ECO:0000305" key="14"/>
<evidence type="ECO:0000305" key="15">
    <source>
    </source>
</evidence>